<name>SYC_LACLS</name>
<evidence type="ECO:0000255" key="1">
    <source>
        <dbReference type="HAMAP-Rule" id="MF_00041"/>
    </source>
</evidence>
<keyword id="KW-0030">Aminoacyl-tRNA synthetase</keyword>
<keyword id="KW-0067">ATP-binding</keyword>
<keyword id="KW-0963">Cytoplasm</keyword>
<keyword id="KW-0436">Ligase</keyword>
<keyword id="KW-0479">Metal-binding</keyword>
<keyword id="KW-0547">Nucleotide-binding</keyword>
<keyword id="KW-0648">Protein biosynthesis</keyword>
<keyword id="KW-0862">Zinc</keyword>
<sequence length="448" mass="50935">MKIYNTYSRQLEDFQPIEPGKVKMYVCGPTVYNYIHVGNARSVVAFDLVRKYLEFRGFEVEYISNFTDVDDKIIKAAVSENISTKELSERYIAAFYEDTDLLNVKRASQNPKATEFIEAMIDFIQELLDKDYAYISEGDVYFRVAKSKNYAKLANKNLADLLAGASGRTDEETNLKESPADFALWKSVKADEVSWQAPWGAGRPGWHIECSVMSTSLLGETIDIHGGGADLEFPHHTNEIAQSEAKTGQKFVNYWMHNGFVNVDGEKMSKSLGNFTTVHELLQVVDPQILRFFLATTHYRRPLNFTDDALTEAENNIKKIENAYRHLDDQAESNLSALTTFRNDFVAAMDEDFNIANGMTVFYDFVSWVNKGNGGAEVKAFFDQVLEILGIKFEIEQSLDSEIEAMIEARQLAREVRDFAKSDEIRDALKAQGIVLEDTKDGVRWHRE</sequence>
<protein>
    <recommendedName>
        <fullName evidence="1">Cysteine--tRNA ligase</fullName>
        <ecNumber evidence="1">6.1.1.16</ecNumber>
    </recommendedName>
    <alternativeName>
        <fullName evidence="1">Cysteinyl-tRNA synthetase</fullName>
        <shortName evidence="1">CysRS</shortName>
    </alternativeName>
</protein>
<dbReference type="EC" id="6.1.1.16" evidence="1"/>
<dbReference type="EMBL" id="CP000425">
    <property type="protein sequence ID" value="ABJ73523.1"/>
    <property type="molecule type" value="Genomic_DNA"/>
</dbReference>
<dbReference type="RefSeq" id="WP_011676863.1">
    <property type="nucleotide sequence ID" value="NC_008527.1"/>
</dbReference>
<dbReference type="SMR" id="Q02WZ9"/>
<dbReference type="KEGG" id="llc:LACR_2043"/>
<dbReference type="HOGENOM" id="CLU_013528_0_1_9"/>
<dbReference type="Proteomes" id="UP000000240">
    <property type="component" value="Chromosome"/>
</dbReference>
<dbReference type="GO" id="GO:0005829">
    <property type="term" value="C:cytosol"/>
    <property type="evidence" value="ECO:0007669"/>
    <property type="project" value="TreeGrafter"/>
</dbReference>
<dbReference type="GO" id="GO:0005524">
    <property type="term" value="F:ATP binding"/>
    <property type="evidence" value="ECO:0007669"/>
    <property type="project" value="UniProtKB-UniRule"/>
</dbReference>
<dbReference type="GO" id="GO:0004817">
    <property type="term" value="F:cysteine-tRNA ligase activity"/>
    <property type="evidence" value="ECO:0007669"/>
    <property type="project" value="UniProtKB-UniRule"/>
</dbReference>
<dbReference type="GO" id="GO:0008270">
    <property type="term" value="F:zinc ion binding"/>
    <property type="evidence" value="ECO:0007669"/>
    <property type="project" value="UniProtKB-UniRule"/>
</dbReference>
<dbReference type="GO" id="GO:0006423">
    <property type="term" value="P:cysteinyl-tRNA aminoacylation"/>
    <property type="evidence" value="ECO:0007669"/>
    <property type="project" value="UniProtKB-UniRule"/>
</dbReference>
<dbReference type="CDD" id="cd00672">
    <property type="entry name" value="CysRS_core"/>
    <property type="match status" value="1"/>
</dbReference>
<dbReference type="FunFam" id="3.40.50.620:FF:000130">
    <property type="entry name" value="Cysteine--tRNA ligase"/>
    <property type="match status" value="1"/>
</dbReference>
<dbReference type="Gene3D" id="1.20.120.1910">
    <property type="entry name" value="Cysteine-tRNA ligase, C-terminal anti-codon recognition domain"/>
    <property type="match status" value="1"/>
</dbReference>
<dbReference type="Gene3D" id="3.40.50.620">
    <property type="entry name" value="HUPs"/>
    <property type="match status" value="1"/>
</dbReference>
<dbReference type="HAMAP" id="MF_00041">
    <property type="entry name" value="Cys_tRNA_synth"/>
    <property type="match status" value="1"/>
</dbReference>
<dbReference type="InterPro" id="IPR015803">
    <property type="entry name" value="Cys-tRNA-ligase"/>
</dbReference>
<dbReference type="InterPro" id="IPR015273">
    <property type="entry name" value="Cys-tRNA-synt_Ia_DALR"/>
</dbReference>
<dbReference type="InterPro" id="IPR024909">
    <property type="entry name" value="Cys-tRNA/MSH_ligase"/>
</dbReference>
<dbReference type="InterPro" id="IPR056411">
    <property type="entry name" value="CysS_C"/>
</dbReference>
<dbReference type="InterPro" id="IPR014729">
    <property type="entry name" value="Rossmann-like_a/b/a_fold"/>
</dbReference>
<dbReference type="InterPro" id="IPR032678">
    <property type="entry name" value="tRNA-synt_1_cat_dom"/>
</dbReference>
<dbReference type="InterPro" id="IPR009080">
    <property type="entry name" value="tRNAsynth_Ia_anticodon-bd"/>
</dbReference>
<dbReference type="NCBIfam" id="TIGR00435">
    <property type="entry name" value="cysS"/>
    <property type="match status" value="1"/>
</dbReference>
<dbReference type="PANTHER" id="PTHR10890:SF3">
    <property type="entry name" value="CYSTEINE--TRNA LIGASE, CYTOPLASMIC"/>
    <property type="match status" value="1"/>
</dbReference>
<dbReference type="PANTHER" id="PTHR10890">
    <property type="entry name" value="CYSTEINYL-TRNA SYNTHETASE"/>
    <property type="match status" value="1"/>
</dbReference>
<dbReference type="Pfam" id="PF23493">
    <property type="entry name" value="CysS_C"/>
    <property type="match status" value="1"/>
</dbReference>
<dbReference type="Pfam" id="PF09190">
    <property type="entry name" value="DALR_2"/>
    <property type="match status" value="1"/>
</dbReference>
<dbReference type="Pfam" id="PF01406">
    <property type="entry name" value="tRNA-synt_1e"/>
    <property type="match status" value="1"/>
</dbReference>
<dbReference type="PRINTS" id="PR00983">
    <property type="entry name" value="TRNASYNTHCYS"/>
</dbReference>
<dbReference type="SMART" id="SM00840">
    <property type="entry name" value="DALR_2"/>
    <property type="match status" value="1"/>
</dbReference>
<dbReference type="SUPFAM" id="SSF47323">
    <property type="entry name" value="Anticodon-binding domain of a subclass of class I aminoacyl-tRNA synthetases"/>
    <property type="match status" value="1"/>
</dbReference>
<dbReference type="SUPFAM" id="SSF52374">
    <property type="entry name" value="Nucleotidylyl transferase"/>
    <property type="match status" value="1"/>
</dbReference>
<proteinExistence type="inferred from homology"/>
<gene>
    <name evidence="1" type="primary">cysS</name>
    <name type="ordered locus">LACR_2043</name>
</gene>
<accession>Q02WZ9</accession>
<comment type="catalytic activity">
    <reaction evidence="1">
        <text>tRNA(Cys) + L-cysteine + ATP = L-cysteinyl-tRNA(Cys) + AMP + diphosphate</text>
        <dbReference type="Rhea" id="RHEA:17773"/>
        <dbReference type="Rhea" id="RHEA-COMP:9661"/>
        <dbReference type="Rhea" id="RHEA-COMP:9679"/>
        <dbReference type="ChEBI" id="CHEBI:30616"/>
        <dbReference type="ChEBI" id="CHEBI:33019"/>
        <dbReference type="ChEBI" id="CHEBI:35235"/>
        <dbReference type="ChEBI" id="CHEBI:78442"/>
        <dbReference type="ChEBI" id="CHEBI:78517"/>
        <dbReference type="ChEBI" id="CHEBI:456215"/>
        <dbReference type="EC" id="6.1.1.16"/>
    </reaction>
</comment>
<comment type="cofactor">
    <cofactor evidence="1">
        <name>Zn(2+)</name>
        <dbReference type="ChEBI" id="CHEBI:29105"/>
    </cofactor>
    <text evidence="1">Binds 1 zinc ion per subunit.</text>
</comment>
<comment type="subunit">
    <text evidence="1">Monomer.</text>
</comment>
<comment type="subcellular location">
    <subcellularLocation>
        <location evidence="1">Cytoplasm</location>
    </subcellularLocation>
</comment>
<comment type="similarity">
    <text evidence="1">Belongs to the class-I aminoacyl-tRNA synthetase family.</text>
</comment>
<reference key="1">
    <citation type="journal article" date="2006" name="Proc. Natl. Acad. Sci. U.S.A.">
        <title>Comparative genomics of the lactic acid bacteria.</title>
        <authorList>
            <person name="Makarova K.S."/>
            <person name="Slesarev A."/>
            <person name="Wolf Y.I."/>
            <person name="Sorokin A."/>
            <person name="Mirkin B."/>
            <person name="Koonin E.V."/>
            <person name="Pavlov A."/>
            <person name="Pavlova N."/>
            <person name="Karamychev V."/>
            <person name="Polouchine N."/>
            <person name="Shakhova V."/>
            <person name="Grigoriev I."/>
            <person name="Lou Y."/>
            <person name="Rohksar D."/>
            <person name="Lucas S."/>
            <person name="Huang K."/>
            <person name="Goodstein D.M."/>
            <person name="Hawkins T."/>
            <person name="Plengvidhya V."/>
            <person name="Welker D."/>
            <person name="Hughes J."/>
            <person name="Goh Y."/>
            <person name="Benson A."/>
            <person name="Baldwin K."/>
            <person name="Lee J.-H."/>
            <person name="Diaz-Muniz I."/>
            <person name="Dosti B."/>
            <person name="Smeianov V."/>
            <person name="Wechter W."/>
            <person name="Barabote R."/>
            <person name="Lorca G."/>
            <person name="Altermann E."/>
            <person name="Barrangou R."/>
            <person name="Ganesan B."/>
            <person name="Xie Y."/>
            <person name="Rawsthorne H."/>
            <person name="Tamir D."/>
            <person name="Parker C."/>
            <person name="Breidt F."/>
            <person name="Broadbent J.R."/>
            <person name="Hutkins R."/>
            <person name="O'Sullivan D."/>
            <person name="Steele J."/>
            <person name="Unlu G."/>
            <person name="Saier M.H. Jr."/>
            <person name="Klaenhammer T."/>
            <person name="Richardson P."/>
            <person name="Kozyavkin S."/>
            <person name="Weimer B.C."/>
            <person name="Mills D.A."/>
        </authorList>
    </citation>
    <scope>NUCLEOTIDE SEQUENCE [LARGE SCALE GENOMIC DNA]</scope>
    <source>
        <strain>SK11</strain>
    </source>
</reference>
<organism>
    <name type="scientific">Lactococcus lactis subsp. cremoris (strain SK11)</name>
    <dbReference type="NCBI Taxonomy" id="272622"/>
    <lineage>
        <taxon>Bacteria</taxon>
        <taxon>Bacillati</taxon>
        <taxon>Bacillota</taxon>
        <taxon>Bacilli</taxon>
        <taxon>Lactobacillales</taxon>
        <taxon>Streptococcaceae</taxon>
        <taxon>Lactococcus</taxon>
        <taxon>Lactococcus cremoris subsp. cremoris</taxon>
    </lineage>
</organism>
<feature type="chain" id="PRO_0000332841" description="Cysteine--tRNA ligase">
    <location>
        <begin position="1"/>
        <end position="448"/>
    </location>
</feature>
<feature type="short sequence motif" description="'HIGH' region">
    <location>
        <begin position="29"/>
        <end position="39"/>
    </location>
</feature>
<feature type="short sequence motif" description="'KMSKS' region">
    <location>
        <begin position="267"/>
        <end position="271"/>
    </location>
</feature>
<feature type="binding site" evidence="1">
    <location>
        <position position="27"/>
    </location>
    <ligand>
        <name>Zn(2+)</name>
        <dbReference type="ChEBI" id="CHEBI:29105"/>
    </ligand>
</feature>
<feature type="binding site" evidence="1">
    <location>
        <position position="210"/>
    </location>
    <ligand>
        <name>Zn(2+)</name>
        <dbReference type="ChEBI" id="CHEBI:29105"/>
    </ligand>
</feature>
<feature type="binding site" evidence="1">
    <location>
        <position position="235"/>
    </location>
    <ligand>
        <name>Zn(2+)</name>
        <dbReference type="ChEBI" id="CHEBI:29105"/>
    </ligand>
</feature>
<feature type="binding site" evidence="1">
    <location>
        <position position="239"/>
    </location>
    <ligand>
        <name>Zn(2+)</name>
        <dbReference type="ChEBI" id="CHEBI:29105"/>
    </ligand>
</feature>
<feature type="binding site" evidence="1">
    <location>
        <position position="270"/>
    </location>
    <ligand>
        <name>ATP</name>
        <dbReference type="ChEBI" id="CHEBI:30616"/>
    </ligand>
</feature>